<feature type="chain" id="PRO_1000018203" description="Tryptophan synthase alpha chain">
    <location>
        <begin position="1"/>
        <end position="269"/>
    </location>
</feature>
<feature type="active site" description="Proton acceptor" evidence="1">
    <location>
        <position position="50"/>
    </location>
</feature>
<feature type="active site" description="Proton acceptor" evidence="1">
    <location>
        <position position="61"/>
    </location>
</feature>
<dbReference type="EC" id="4.2.1.20" evidence="1"/>
<dbReference type="EMBL" id="CP000803">
    <property type="protein sequence ID" value="ABU60584.1"/>
    <property type="molecule type" value="Genomic_DNA"/>
</dbReference>
<dbReference type="RefSeq" id="WP_003014080.1">
    <property type="nucleotide sequence ID" value="NC_009749.1"/>
</dbReference>
<dbReference type="SMR" id="A7N9D1"/>
<dbReference type="KEGG" id="fta:FTA_0106"/>
<dbReference type="HOGENOM" id="CLU_016734_0_4_6"/>
<dbReference type="UniPathway" id="UPA00035">
    <property type="reaction ID" value="UER00044"/>
</dbReference>
<dbReference type="GO" id="GO:0005829">
    <property type="term" value="C:cytosol"/>
    <property type="evidence" value="ECO:0007669"/>
    <property type="project" value="TreeGrafter"/>
</dbReference>
<dbReference type="GO" id="GO:0004834">
    <property type="term" value="F:tryptophan synthase activity"/>
    <property type="evidence" value="ECO:0007669"/>
    <property type="project" value="UniProtKB-UniRule"/>
</dbReference>
<dbReference type="CDD" id="cd04724">
    <property type="entry name" value="Tryptophan_synthase_alpha"/>
    <property type="match status" value="1"/>
</dbReference>
<dbReference type="FunFam" id="3.20.20.70:FF:000037">
    <property type="entry name" value="Tryptophan synthase alpha chain"/>
    <property type="match status" value="1"/>
</dbReference>
<dbReference type="Gene3D" id="3.20.20.70">
    <property type="entry name" value="Aldolase class I"/>
    <property type="match status" value="1"/>
</dbReference>
<dbReference type="HAMAP" id="MF_00131">
    <property type="entry name" value="Trp_synth_alpha"/>
    <property type="match status" value="1"/>
</dbReference>
<dbReference type="InterPro" id="IPR013785">
    <property type="entry name" value="Aldolase_TIM"/>
</dbReference>
<dbReference type="InterPro" id="IPR011060">
    <property type="entry name" value="RibuloseP-bd_barrel"/>
</dbReference>
<dbReference type="InterPro" id="IPR002028">
    <property type="entry name" value="Trp_synthase_suA"/>
</dbReference>
<dbReference type="NCBIfam" id="TIGR00262">
    <property type="entry name" value="trpA"/>
    <property type="match status" value="1"/>
</dbReference>
<dbReference type="PANTHER" id="PTHR43406:SF1">
    <property type="entry name" value="TRYPTOPHAN SYNTHASE ALPHA CHAIN, CHLOROPLASTIC"/>
    <property type="match status" value="1"/>
</dbReference>
<dbReference type="PANTHER" id="PTHR43406">
    <property type="entry name" value="TRYPTOPHAN SYNTHASE, ALPHA CHAIN"/>
    <property type="match status" value="1"/>
</dbReference>
<dbReference type="Pfam" id="PF00290">
    <property type="entry name" value="Trp_syntA"/>
    <property type="match status" value="1"/>
</dbReference>
<dbReference type="SUPFAM" id="SSF51366">
    <property type="entry name" value="Ribulose-phoshate binding barrel"/>
    <property type="match status" value="1"/>
</dbReference>
<accession>A7N9D1</accession>
<gene>
    <name evidence="1" type="primary">trpA</name>
    <name type="ordered locus">FTA_0106</name>
</gene>
<keyword id="KW-0028">Amino-acid biosynthesis</keyword>
<keyword id="KW-0057">Aromatic amino acid biosynthesis</keyword>
<keyword id="KW-0456">Lyase</keyword>
<keyword id="KW-0822">Tryptophan biosynthesis</keyword>
<comment type="function">
    <text evidence="1">The alpha subunit is responsible for the aldol cleavage of indoleglycerol phosphate to indole and glyceraldehyde 3-phosphate.</text>
</comment>
<comment type="catalytic activity">
    <reaction evidence="1">
        <text>(1S,2R)-1-C-(indol-3-yl)glycerol 3-phosphate + L-serine = D-glyceraldehyde 3-phosphate + L-tryptophan + H2O</text>
        <dbReference type="Rhea" id="RHEA:10532"/>
        <dbReference type="ChEBI" id="CHEBI:15377"/>
        <dbReference type="ChEBI" id="CHEBI:33384"/>
        <dbReference type="ChEBI" id="CHEBI:57912"/>
        <dbReference type="ChEBI" id="CHEBI:58866"/>
        <dbReference type="ChEBI" id="CHEBI:59776"/>
        <dbReference type="EC" id="4.2.1.20"/>
    </reaction>
</comment>
<comment type="pathway">
    <text evidence="1">Amino-acid biosynthesis; L-tryptophan biosynthesis; L-tryptophan from chorismate: step 5/5.</text>
</comment>
<comment type="subunit">
    <text evidence="1">Tetramer of two alpha and two beta chains.</text>
</comment>
<comment type="similarity">
    <text evidence="1">Belongs to the TrpA family.</text>
</comment>
<protein>
    <recommendedName>
        <fullName evidence="1">Tryptophan synthase alpha chain</fullName>
        <ecNumber evidence="1">4.2.1.20</ecNumber>
    </recommendedName>
</protein>
<name>TRPA_FRATF</name>
<proteinExistence type="inferred from homology"/>
<organism>
    <name type="scientific">Francisella tularensis subsp. holarctica (strain FTNF002-00 / FTA)</name>
    <dbReference type="NCBI Taxonomy" id="458234"/>
    <lineage>
        <taxon>Bacteria</taxon>
        <taxon>Pseudomonadati</taxon>
        <taxon>Pseudomonadota</taxon>
        <taxon>Gammaproteobacteria</taxon>
        <taxon>Thiotrichales</taxon>
        <taxon>Francisellaceae</taxon>
        <taxon>Francisella</taxon>
    </lineage>
</organism>
<evidence type="ECO:0000255" key="1">
    <source>
        <dbReference type="HAMAP-Rule" id="MF_00131"/>
    </source>
</evidence>
<reference key="1">
    <citation type="journal article" date="2009" name="PLoS ONE">
        <title>Complete genome sequence of Francisella tularensis subspecies holarctica FTNF002-00.</title>
        <authorList>
            <person name="Barabote R.D."/>
            <person name="Xie G."/>
            <person name="Brettin T.S."/>
            <person name="Hinrichs S.H."/>
            <person name="Fey P.D."/>
            <person name="Jay J.J."/>
            <person name="Engle J.L."/>
            <person name="Godbole S.D."/>
            <person name="Noronha J.M."/>
            <person name="Scheuermann R.H."/>
            <person name="Zhou L.W."/>
            <person name="Lion C."/>
            <person name="Dempsey M.P."/>
        </authorList>
    </citation>
    <scope>NUCLEOTIDE SEQUENCE [LARGE SCALE GENOMIC DNA]</scope>
    <source>
        <strain>FTNF002-00 / FTA</strain>
    </source>
</reference>
<sequence>MTNRYTTLFANLEKRNEGAFIPFVTIGDPNKALSFEIIDTLVSSGADALELGIPFSDHLADGPTIQEANIRALESGITPKDCFDILTKIRAKYPHIPIGLLLYANLVYANGIENFYQKCLDAGVDSILIADVPAHESKEFRDIAKKVGIAQIFIAPPDASESTLKQISKLGSGYTYLLSRVGVTGTETAANMPVEDVLAKLREYNAPKPVLGFGISKPEQVQQAIKAGAAGAISGSATVKIIQNNISNKQKMLNELTYFVKEMKAATLN</sequence>